<protein>
    <recommendedName>
        <fullName>Macro domain-containing protein VPA0103</fullName>
    </recommendedName>
</protein>
<proteinExistence type="inferred from homology"/>
<evidence type="ECO:0000255" key="1">
    <source>
        <dbReference type="PROSITE-ProRule" id="PRU00490"/>
    </source>
</evidence>
<evidence type="ECO:0000305" key="2"/>
<organism>
    <name type="scientific">Vibrio parahaemolyticus serotype O3:K6 (strain RIMD 2210633)</name>
    <dbReference type="NCBI Taxonomy" id="223926"/>
    <lineage>
        <taxon>Bacteria</taxon>
        <taxon>Pseudomonadati</taxon>
        <taxon>Pseudomonadota</taxon>
        <taxon>Gammaproteobacteria</taxon>
        <taxon>Vibrionales</taxon>
        <taxon>Vibrionaceae</taxon>
        <taxon>Vibrio</taxon>
    </lineage>
</organism>
<accession>Q87JZ5</accession>
<gene>
    <name type="ordered locus">VPA0103</name>
</gene>
<feature type="chain" id="PRO_0000089224" description="Macro domain-containing protein VPA0103">
    <location>
        <begin position="1"/>
        <end position="170"/>
    </location>
</feature>
<feature type="domain" description="Macro" evidence="1">
    <location>
        <begin position="1"/>
        <end position="170"/>
    </location>
</feature>
<comment type="similarity">
    <text evidence="2">Belongs to the MacroD-type family.</text>
</comment>
<dbReference type="EMBL" id="BA000032">
    <property type="protein sequence ID" value="BAC61446.1"/>
    <property type="molecule type" value="Genomic_DNA"/>
</dbReference>
<dbReference type="RefSeq" id="NP_799613.1">
    <property type="nucleotide sequence ID" value="NC_004605.1"/>
</dbReference>
<dbReference type="RefSeq" id="WP_005482857.1">
    <property type="nucleotide sequence ID" value="NC_004605.1"/>
</dbReference>
<dbReference type="SMR" id="Q87JZ5"/>
<dbReference type="GeneID" id="1190782"/>
<dbReference type="KEGG" id="vpa:VPA0103"/>
<dbReference type="PATRIC" id="fig|223926.6.peg.3063"/>
<dbReference type="eggNOG" id="COG2110">
    <property type="taxonomic scope" value="Bacteria"/>
</dbReference>
<dbReference type="HOGENOM" id="CLU_046550_5_1_6"/>
<dbReference type="Proteomes" id="UP000002493">
    <property type="component" value="Chromosome 2"/>
</dbReference>
<dbReference type="CDD" id="cd02908">
    <property type="entry name" value="Macro_OAADPr_deacetylase"/>
    <property type="match status" value="1"/>
</dbReference>
<dbReference type="Gene3D" id="3.40.220.10">
    <property type="entry name" value="Leucine Aminopeptidase, subunit E, domain 1"/>
    <property type="match status" value="1"/>
</dbReference>
<dbReference type="InterPro" id="IPR002589">
    <property type="entry name" value="Macro_dom"/>
</dbReference>
<dbReference type="InterPro" id="IPR043472">
    <property type="entry name" value="Macro_dom-like"/>
</dbReference>
<dbReference type="PANTHER" id="PTHR11106">
    <property type="entry name" value="GANGLIOSIDE INDUCED DIFFERENTIATION ASSOCIATED PROTEIN 2-RELATED"/>
    <property type="match status" value="1"/>
</dbReference>
<dbReference type="PANTHER" id="PTHR11106:SF27">
    <property type="entry name" value="MACRO DOMAIN-CONTAINING PROTEIN"/>
    <property type="match status" value="1"/>
</dbReference>
<dbReference type="Pfam" id="PF01661">
    <property type="entry name" value="Macro"/>
    <property type="match status" value="1"/>
</dbReference>
<dbReference type="SMART" id="SM00506">
    <property type="entry name" value="A1pp"/>
    <property type="match status" value="1"/>
</dbReference>
<dbReference type="SUPFAM" id="SSF52949">
    <property type="entry name" value="Macro domain-like"/>
    <property type="match status" value="1"/>
</dbReference>
<dbReference type="PROSITE" id="PS51154">
    <property type="entry name" value="MACRO"/>
    <property type="match status" value="1"/>
</dbReference>
<sequence>MNAISLVQGDITTAHVDAIVNAANPRMLGGGGVDGAIHRAAGPALINACYAVDDVDGIRCPFGDARITEAGNLNARYVIHAVGPIYDKFADPKTVLESAYQRSLDLALANHCQSVALPAISCGVYGYPPQEAAEVAMAVCQRPEYAALDMRFYLFSEEMLSIWQHALTQH</sequence>
<reference key="1">
    <citation type="journal article" date="2003" name="Lancet">
        <title>Genome sequence of Vibrio parahaemolyticus: a pathogenic mechanism distinct from that of V. cholerae.</title>
        <authorList>
            <person name="Makino K."/>
            <person name="Oshima K."/>
            <person name="Kurokawa K."/>
            <person name="Yokoyama K."/>
            <person name="Uda T."/>
            <person name="Tagomori K."/>
            <person name="Iijima Y."/>
            <person name="Najima M."/>
            <person name="Nakano M."/>
            <person name="Yamashita A."/>
            <person name="Kubota Y."/>
            <person name="Kimura S."/>
            <person name="Yasunaga T."/>
            <person name="Honda T."/>
            <person name="Shinagawa H."/>
            <person name="Hattori M."/>
            <person name="Iida T."/>
        </authorList>
    </citation>
    <scope>NUCLEOTIDE SEQUENCE [LARGE SCALE GENOMIC DNA]</scope>
    <source>
        <strain>RIMD 2210633</strain>
    </source>
</reference>
<name>Y4103_VIBPA</name>